<keyword id="KW-0687">Ribonucleoprotein</keyword>
<keyword id="KW-0689">Ribosomal protein</keyword>
<name>RL13_YERPN</name>
<accession>Q1CE08</accession>
<accession>D1Q1B9</accession>
<evidence type="ECO:0000255" key="1">
    <source>
        <dbReference type="HAMAP-Rule" id="MF_01366"/>
    </source>
</evidence>
<evidence type="ECO:0000305" key="2"/>
<dbReference type="EMBL" id="CP000305">
    <property type="protein sequence ID" value="ABG19772.1"/>
    <property type="molecule type" value="Genomic_DNA"/>
</dbReference>
<dbReference type="EMBL" id="ACNQ01000019">
    <property type="protein sequence ID" value="EEO74322.1"/>
    <property type="molecule type" value="Genomic_DNA"/>
</dbReference>
<dbReference type="RefSeq" id="WP_002210132.1">
    <property type="nucleotide sequence ID" value="NZ_ACNQ01000019.1"/>
</dbReference>
<dbReference type="SMR" id="Q1CE08"/>
<dbReference type="GeneID" id="96662998"/>
<dbReference type="KEGG" id="ypn:YPN_3445"/>
<dbReference type="HOGENOM" id="CLU_082184_2_2_6"/>
<dbReference type="Proteomes" id="UP000008936">
    <property type="component" value="Chromosome"/>
</dbReference>
<dbReference type="GO" id="GO:0022625">
    <property type="term" value="C:cytosolic large ribosomal subunit"/>
    <property type="evidence" value="ECO:0007669"/>
    <property type="project" value="TreeGrafter"/>
</dbReference>
<dbReference type="GO" id="GO:0003729">
    <property type="term" value="F:mRNA binding"/>
    <property type="evidence" value="ECO:0007669"/>
    <property type="project" value="TreeGrafter"/>
</dbReference>
<dbReference type="GO" id="GO:0003735">
    <property type="term" value="F:structural constituent of ribosome"/>
    <property type="evidence" value="ECO:0007669"/>
    <property type="project" value="InterPro"/>
</dbReference>
<dbReference type="GO" id="GO:0017148">
    <property type="term" value="P:negative regulation of translation"/>
    <property type="evidence" value="ECO:0007669"/>
    <property type="project" value="TreeGrafter"/>
</dbReference>
<dbReference type="GO" id="GO:0006412">
    <property type="term" value="P:translation"/>
    <property type="evidence" value="ECO:0007669"/>
    <property type="project" value="UniProtKB-UniRule"/>
</dbReference>
<dbReference type="CDD" id="cd00392">
    <property type="entry name" value="Ribosomal_L13"/>
    <property type="match status" value="1"/>
</dbReference>
<dbReference type="FunFam" id="3.90.1180.10:FF:000001">
    <property type="entry name" value="50S ribosomal protein L13"/>
    <property type="match status" value="1"/>
</dbReference>
<dbReference type="Gene3D" id="3.90.1180.10">
    <property type="entry name" value="Ribosomal protein L13"/>
    <property type="match status" value="1"/>
</dbReference>
<dbReference type="HAMAP" id="MF_01366">
    <property type="entry name" value="Ribosomal_uL13"/>
    <property type="match status" value="1"/>
</dbReference>
<dbReference type="InterPro" id="IPR005822">
    <property type="entry name" value="Ribosomal_uL13"/>
</dbReference>
<dbReference type="InterPro" id="IPR005823">
    <property type="entry name" value="Ribosomal_uL13_bac-type"/>
</dbReference>
<dbReference type="InterPro" id="IPR023563">
    <property type="entry name" value="Ribosomal_uL13_CS"/>
</dbReference>
<dbReference type="InterPro" id="IPR036899">
    <property type="entry name" value="Ribosomal_uL13_sf"/>
</dbReference>
<dbReference type="NCBIfam" id="TIGR01066">
    <property type="entry name" value="rplM_bact"/>
    <property type="match status" value="1"/>
</dbReference>
<dbReference type="PANTHER" id="PTHR11545:SF2">
    <property type="entry name" value="LARGE RIBOSOMAL SUBUNIT PROTEIN UL13M"/>
    <property type="match status" value="1"/>
</dbReference>
<dbReference type="PANTHER" id="PTHR11545">
    <property type="entry name" value="RIBOSOMAL PROTEIN L13"/>
    <property type="match status" value="1"/>
</dbReference>
<dbReference type="Pfam" id="PF00572">
    <property type="entry name" value="Ribosomal_L13"/>
    <property type="match status" value="1"/>
</dbReference>
<dbReference type="PIRSF" id="PIRSF002181">
    <property type="entry name" value="Ribosomal_L13"/>
    <property type="match status" value="1"/>
</dbReference>
<dbReference type="SUPFAM" id="SSF52161">
    <property type="entry name" value="Ribosomal protein L13"/>
    <property type="match status" value="1"/>
</dbReference>
<dbReference type="PROSITE" id="PS00783">
    <property type="entry name" value="RIBOSOMAL_L13"/>
    <property type="match status" value="1"/>
</dbReference>
<proteinExistence type="inferred from homology"/>
<feature type="chain" id="PRO_0000261834" description="Large ribosomal subunit protein uL13">
    <location>
        <begin position="1"/>
        <end position="142"/>
    </location>
</feature>
<gene>
    <name evidence="1" type="primary">rplM</name>
    <name type="ordered locus">YPN_3445</name>
    <name type="ORF">YP516_3917</name>
</gene>
<protein>
    <recommendedName>
        <fullName evidence="1">Large ribosomal subunit protein uL13</fullName>
    </recommendedName>
    <alternativeName>
        <fullName evidence="2">50S ribosomal protein L13</fullName>
    </alternativeName>
</protein>
<reference key="1">
    <citation type="journal article" date="2006" name="J. Bacteriol.">
        <title>Complete genome sequence of Yersinia pestis strains Antiqua and Nepal516: evidence of gene reduction in an emerging pathogen.</title>
        <authorList>
            <person name="Chain P.S.G."/>
            <person name="Hu P."/>
            <person name="Malfatti S.A."/>
            <person name="Radnedge L."/>
            <person name="Larimer F."/>
            <person name="Vergez L.M."/>
            <person name="Worsham P."/>
            <person name="Chu M.C."/>
            <person name="Andersen G.L."/>
        </authorList>
    </citation>
    <scope>NUCLEOTIDE SEQUENCE [LARGE SCALE GENOMIC DNA]</scope>
    <source>
        <strain>Nepal516</strain>
    </source>
</reference>
<reference key="2">
    <citation type="submission" date="2009-04" db="EMBL/GenBank/DDBJ databases">
        <title>Yersinia pestis Nepal516A whole genome shotgun sequencing project.</title>
        <authorList>
            <person name="Plunkett G. III"/>
            <person name="Anderson B.D."/>
            <person name="Baumler D.J."/>
            <person name="Burland V."/>
            <person name="Cabot E.L."/>
            <person name="Glasner J.D."/>
            <person name="Mau B."/>
            <person name="Neeno-Eckwall E."/>
            <person name="Perna N.T."/>
            <person name="Munk A.C."/>
            <person name="Tapia R."/>
            <person name="Green L.D."/>
            <person name="Rogers Y.C."/>
            <person name="Detter J.C."/>
            <person name="Bruce D.C."/>
            <person name="Brettin T.S."/>
        </authorList>
    </citation>
    <scope>NUCLEOTIDE SEQUENCE [LARGE SCALE GENOMIC DNA]</scope>
    <source>
        <strain>Nepal516</strain>
    </source>
</reference>
<sequence>MKTFTAKPETVKRDWYVVDASGKTLGRLATELARRLRGKHKAEYTPHVDTGDYIIVLNAEKVAVTGNKRTDKIYYHHTGFVGGIKQATFEEMIARRPERVIEIAVKGMLPKGPLGRAMYRKLKVYAGTEHNHAAQQPQVLDI</sequence>
<comment type="function">
    <text evidence="1">This protein is one of the early assembly proteins of the 50S ribosomal subunit, although it is not seen to bind rRNA by itself. It is important during the early stages of 50S assembly.</text>
</comment>
<comment type="subunit">
    <text evidence="1">Part of the 50S ribosomal subunit.</text>
</comment>
<comment type="similarity">
    <text evidence="1">Belongs to the universal ribosomal protein uL13 family.</text>
</comment>
<organism>
    <name type="scientific">Yersinia pestis bv. Antiqua (strain Nepal516)</name>
    <dbReference type="NCBI Taxonomy" id="377628"/>
    <lineage>
        <taxon>Bacteria</taxon>
        <taxon>Pseudomonadati</taxon>
        <taxon>Pseudomonadota</taxon>
        <taxon>Gammaproteobacteria</taxon>
        <taxon>Enterobacterales</taxon>
        <taxon>Yersiniaceae</taxon>
        <taxon>Yersinia</taxon>
    </lineage>
</organism>